<sequence length="337" mass="36122">MKAAVITKDHTIEVKDTKLRPLKYGEALLEMEYCGVCHTDLHVKNGDFGDETGRITGHEGIGIVKQVGEGVTSLKVGDRASVAWFFKGCGHCEYCVSGNETLCRNVENAGYTVDGAMAEECIVVADYSVKVPDGLDPAVASSITCAGVTTYKAVKVSQIQPGQWLAIYGLGGLGNLALQYAKNVFNAKVIAIDVNDEQLAFAKELGADMVINPKNEDAAKIIQEKVGGAHATVVTAVAKSAFNSAVEAIRAGGRVVAVGLPPEKMDLSIPRLVLDGIEVLGSLVGTREDLKEAFQFAAEGKVKPKVTKRKVEEINQIFDEMEHGKFTGRMVVDFTHH</sequence>
<evidence type="ECO:0000250" key="1"/>
<evidence type="ECO:0000305" key="2"/>
<comment type="catalytic activity">
    <reaction>
        <text>a primary alcohol + NAD(+) = an aldehyde + NADH + H(+)</text>
        <dbReference type="Rhea" id="RHEA:10736"/>
        <dbReference type="ChEBI" id="CHEBI:15378"/>
        <dbReference type="ChEBI" id="CHEBI:15734"/>
        <dbReference type="ChEBI" id="CHEBI:17478"/>
        <dbReference type="ChEBI" id="CHEBI:57540"/>
        <dbReference type="ChEBI" id="CHEBI:57945"/>
        <dbReference type="EC" id="1.1.1.1"/>
    </reaction>
</comment>
<comment type="catalytic activity">
    <reaction>
        <text>a secondary alcohol + NAD(+) = a ketone + NADH + H(+)</text>
        <dbReference type="Rhea" id="RHEA:10740"/>
        <dbReference type="ChEBI" id="CHEBI:15378"/>
        <dbReference type="ChEBI" id="CHEBI:17087"/>
        <dbReference type="ChEBI" id="CHEBI:35681"/>
        <dbReference type="ChEBI" id="CHEBI:57540"/>
        <dbReference type="ChEBI" id="CHEBI:57945"/>
        <dbReference type="EC" id="1.1.1.1"/>
    </reaction>
</comment>
<comment type="cofactor">
    <cofactor evidence="1">
        <name>Zn(2+)</name>
        <dbReference type="ChEBI" id="CHEBI:29105"/>
    </cofactor>
    <text evidence="1">Binds 2 Zn(2+) ions per subunit.</text>
</comment>
<comment type="activity regulation">
    <text>Inhibited by ethanol.</text>
</comment>
<comment type="pathway">
    <text>Alcohol metabolism; ethanol biosynthesis via fermentation pathway.</text>
</comment>
<comment type="subunit">
    <text>Multimeric (with different ratios of monomers).</text>
</comment>
<comment type="miscellaneous">
    <text>In Z.mobilis there are two isozymes of alcohol dehydrogenase.</text>
</comment>
<comment type="similarity">
    <text evidence="2">Belongs to the zinc-containing alcohol dehydrogenase family.</text>
</comment>
<proteinExistence type="evidence at protein level"/>
<keyword id="KW-0903">Direct protein sequencing</keyword>
<keyword id="KW-0479">Metal-binding</keyword>
<keyword id="KW-0520">NAD</keyword>
<keyword id="KW-0560">Oxidoreductase</keyword>
<keyword id="KW-1185">Reference proteome</keyword>
<keyword id="KW-0862">Zinc</keyword>
<organism>
    <name type="scientific">Zymomonas mobilis subsp. mobilis (strain ATCC 31821 / ZM4 / CP4)</name>
    <dbReference type="NCBI Taxonomy" id="264203"/>
    <lineage>
        <taxon>Bacteria</taxon>
        <taxon>Pseudomonadati</taxon>
        <taxon>Pseudomonadota</taxon>
        <taxon>Alphaproteobacteria</taxon>
        <taxon>Sphingomonadales</taxon>
        <taxon>Zymomonadaceae</taxon>
        <taxon>Zymomonas</taxon>
    </lineage>
</organism>
<name>ADH1_ZYMMO</name>
<gene>
    <name type="primary">adhA</name>
    <name type="ordered locus">ZMO1236</name>
</gene>
<accession>P20368</accession>
<accession>Q5NN50</accession>
<accession>Q6Y8J4</accession>
<dbReference type="EC" id="1.1.1.1"/>
<dbReference type="EMBL" id="M32100">
    <property type="protein sequence ID" value="AAA27682.1"/>
    <property type="molecule type" value="Genomic_DNA"/>
</dbReference>
<dbReference type="EMBL" id="AY170008">
    <property type="protein sequence ID" value="AAO38758.1"/>
    <property type="molecule type" value="Genomic_DNA"/>
</dbReference>
<dbReference type="EMBL" id="AE008692">
    <property type="protein sequence ID" value="AAV89860.1"/>
    <property type="molecule type" value="Genomic_DNA"/>
</dbReference>
<dbReference type="EMBL" id="L09650">
    <property type="protein sequence ID" value="AAA71935.2"/>
    <property type="molecule type" value="Genomic_DNA"/>
</dbReference>
<dbReference type="PIR" id="A35260">
    <property type="entry name" value="A35260"/>
</dbReference>
<dbReference type="SMR" id="P20368"/>
<dbReference type="STRING" id="264203.ZMO1236"/>
<dbReference type="KEGG" id="zmo:ZMO1236"/>
<dbReference type="eggNOG" id="COG1064">
    <property type="taxonomic scope" value="Bacteria"/>
</dbReference>
<dbReference type="HOGENOM" id="CLU_026673_20_1_5"/>
<dbReference type="UniPathway" id="UPA00778"/>
<dbReference type="Proteomes" id="UP000001173">
    <property type="component" value="Chromosome"/>
</dbReference>
<dbReference type="GO" id="GO:0004022">
    <property type="term" value="F:alcohol dehydrogenase (NAD+) activity"/>
    <property type="evidence" value="ECO:0007669"/>
    <property type="project" value="UniProtKB-EC"/>
</dbReference>
<dbReference type="GO" id="GO:0008270">
    <property type="term" value="F:zinc ion binding"/>
    <property type="evidence" value="ECO:0007669"/>
    <property type="project" value="InterPro"/>
</dbReference>
<dbReference type="CDD" id="cd08297">
    <property type="entry name" value="CAD3"/>
    <property type="match status" value="1"/>
</dbReference>
<dbReference type="FunFam" id="3.40.50.720:FF:000039">
    <property type="entry name" value="Alcohol dehydrogenase AdhP"/>
    <property type="match status" value="1"/>
</dbReference>
<dbReference type="Gene3D" id="3.90.180.10">
    <property type="entry name" value="Medium-chain alcohol dehydrogenases, catalytic domain"/>
    <property type="match status" value="1"/>
</dbReference>
<dbReference type="Gene3D" id="3.40.50.720">
    <property type="entry name" value="NAD(P)-binding Rossmann-like Domain"/>
    <property type="match status" value="1"/>
</dbReference>
<dbReference type="InterPro" id="IPR013149">
    <property type="entry name" value="ADH-like_C"/>
</dbReference>
<dbReference type="InterPro" id="IPR013154">
    <property type="entry name" value="ADH-like_N"/>
</dbReference>
<dbReference type="InterPro" id="IPR002328">
    <property type="entry name" value="ADH_Zn_CS"/>
</dbReference>
<dbReference type="InterPro" id="IPR011032">
    <property type="entry name" value="GroES-like_sf"/>
</dbReference>
<dbReference type="InterPro" id="IPR036291">
    <property type="entry name" value="NAD(P)-bd_dom_sf"/>
</dbReference>
<dbReference type="InterPro" id="IPR020843">
    <property type="entry name" value="PKS_ER"/>
</dbReference>
<dbReference type="NCBIfam" id="NF006940">
    <property type="entry name" value="PRK09422.1"/>
    <property type="match status" value="1"/>
</dbReference>
<dbReference type="PANTHER" id="PTHR42940">
    <property type="entry name" value="ALCOHOL DEHYDROGENASE 1-RELATED"/>
    <property type="match status" value="1"/>
</dbReference>
<dbReference type="PANTHER" id="PTHR42940:SF8">
    <property type="entry name" value="VACUOLAR PROTEIN SORTING-ASSOCIATED PROTEIN 11"/>
    <property type="match status" value="1"/>
</dbReference>
<dbReference type="Pfam" id="PF08240">
    <property type="entry name" value="ADH_N"/>
    <property type="match status" value="1"/>
</dbReference>
<dbReference type="Pfam" id="PF00107">
    <property type="entry name" value="ADH_zinc_N"/>
    <property type="match status" value="1"/>
</dbReference>
<dbReference type="SMART" id="SM00829">
    <property type="entry name" value="PKS_ER"/>
    <property type="match status" value="1"/>
</dbReference>
<dbReference type="SUPFAM" id="SSF50129">
    <property type="entry name" value="GroES-like"/>
    <property type="match status" value="1"/>
</dbReference>
<dbReference type="SUPFAM" id="SSF51735">
    <property type="entry name" value="NAD(P)-binding Rossmann-fold domains"/>
    <property type="match status" value="1"/>
</dbReference>
<dbReference type="PROSITE" id="PS00059">
    <property type="entry name" value="ADH_ZINC"/>
    <property type="match status" value="1"/>
</dbReference>
<feature type="chain" id="PRO_0000160750" description="Alcohol dehydrogenase 1">
    <location>
        <begin position="1"/>
        <end position="337"/>
    </location>
</feature>
<feature type="binding site" evidence="1">
    <location>
        <position position="37"/>
    </location>
    <ligand>
        <name>Zn(2+)</name>
        <dbReference type="ChEBI" id="CHEBI:29105"/>
        <label>1</label>
        <note>catalytic</note>
    </ligand>
</feature>
<feature type="binding site" evidence="1">
    <location>
        <position position="58"/>
    </location>
    <ligand>
        <name>Zn(2+)</name>
        <dbReference type="ChEBI" id="CHEBI:29105"/>
        <label>1</label>
        <note>catalytic</note>
    </ligand>
</feature>
<feature type="binding site" evidence="1">
    <location>
        <position position="89"/>
    </location>
    <ligand>
        <name>Zn(2+)</name>
        <dbReference type="ChEBI" id="CHEBI:29105"/>
        <label>2</label>
    </ligand>
</feature>
<feature type="binding site" evidence="1">
    <location>
        <position position="92"/>
    </location>
    <ligand>
        <name>Zn(2+)</name>
        <dbReference type="ChEBI" id="CHEBI:29105"/>
        <label>2</label>
    </ligand>
</feature>
<feature type="binding site" evidence="1">
    <location>
        <position position="95"/>
    </location>
    <ligand>
        <name>Zn(2+)</name>
        <dbReference type="ChEBI" id="CHEBI:29105"/>
        <label>2</label>
    </ligand>
</feature>
<feature type="binding site" evidence="1">
    <location>
        <position position="103"/>
    </location>
    <ligand>
        <name>Zn(2+)</name>
        <dbReference type="ChEBI" id="CHEBI:29105"/>
        <label>2</label>
    </ligand>
</feature>
<feature type="binding site" evidence="1">
    <location>
        <position position="145"/>
    </location>
    <ligand>
        <name>Zn(2+)</name>
        <dbReference type="ChEBI" id="CHEBI:29105"/>
        <label>1</label>
        <note>catalytic</note>
    </ligand>
</feature>
<feature type="sequence conflict" description="In Ref. 5; AA sequence." evidence="2" ref="5">
    <original>T</original>
    <variation>I</variation>
    <location>
        <position position="17"/>
    </location>
</feature>
<feature type="sequence conflict" description="In Ref. 5; AA sequence." evidence="2" ref="5">
    <original>E</original>
    <variation>F</variation>
    <location>
        <position position="26"/>
    </location>
</feature>
<feature type="sequence conflict" description="In Ref. 5; AA sequence." evidence="2" ref="5">
    <original>L</original>
    <variation>H</variation>
    <location>
        <position position="28"/>
    </location>
</feature>
<feature type="sequence conflict" description="In Ref. 5; AA sequence." evidence="2" ref="5">
    <original>E</original>
    <variation>P</variation>
    <location>
        <position position="30"/>
    </location>
</feature>
<feature type="sequence conflict" description="In Ref. 1; AAA27682." evidence="2" ref="1">
    <original>V</original>
    <variation>A</variation>
    <location>
        <position position="76"/>
    </location>
</feature>
<protein>
    <recommendedName>
        <fullName>Alcohol dehydrogenase 1</fullName>
        <ecNumber>1.1.1.1</ecNumber>
    </recommendedName>
    <alternativeName>
        <fullName>Alcohol dehydrogenase I</fullName>
        <shortName>ADH I</shortName>
    </alternativeName>
</protein>
<reference key="1">
    <citation type="journal article" date="1990" name="J. Bacteriol.">
        <title>Cloning of the Zymomonas mobilis structural gene encoding alcohol dehydrogenase I (adhA): sequence comparison and expression in Escherichia coli.</title>
        <authorList>
            <person name="Keshav K.F."/>
            <person name="Yomano L.P."/>
            <person name="An H."/>
            <person name="Ingram L.O."/>
        </authorList>
    </citation>
    <scope>NUCLEOTIDE SEQUENCE [GENOMIC DNA]</scope>
    <source>
        <strain>ATCC 31821 / ZM4 / CP4</strain>
    </source>
</reference>
<reference key="2">
    <citation type="submission" date="2002-10" db="EMBL/GenBank/DDBJ databases">
        <title>Mannitol dehydrogenase from Zymomonas mobilis.</title>
        <authorList>
            <person name="O'Mullan P.J."/>
            <person name="Stein D."/>
            <person name="Chase T. Jr."/>
            <person name="Eveleigh D.E."/>
        </authorList>
    </citation>
    <scope>NUCLEOTIDE SEQUENCE [GENOMIC DNA]</scope>
    <source>
        <strain>ATCC 31821 / ZM4 / CP4</strain>
    </source>
</reference>
<reference key="3">
    <citation type="journal article" date="2005" name="Nat. Biotechnol.">
        <title>The genome sequence of the ethanologenic bacterium Zymomonas mobilis ZM4.</title>
        <authorList>
            <person name="Seo J.-S."/>
            <person name="Chong H."/>
            <person name="Park H.S."/>
            <person name="Yoon K.-O."/>
            <person name="Jung C."/>
            <person name="Kim J.J."/>
            <person name="Hong J.H."/>
            <person name="Kim H."/>
            <person name="Kim J.-H."/>
            <person name="Kil J.-I."/>
            <person name="Park C.J."/>
            <person name="Oh H.-M."/>
            <person name="Lee J.-S."/>
            <person name="Jin S.-J."/>
            <person name="Um H.-W."/>
            <person name="Lee H.-J."/>
            <person name="Oh S.-J."/>
            <person name="Kim J.Y."/>
            <person name="Kang H.L."/>
            <person name="Lee S.Y."/>
            <person name="Lee K.J."/>
            <person name="Kang H.S."/>
        </authorList>
    </citation>
    <scope>NUCLEOTIDE SEQUENCE [LARGE SCALE GENOMIC DNA]</scope>
    <source>
        <strain>ATCC 31821 / ZM4 / CP4</strain>
    </source>
</reference>
<reference key="4">
    <citation type="journal article" date="1993" name="J. Bacteriol.">
        <title>Cloning, sequencing, and expression of the Zymomonas mobilis phosphoglycerate mutase gene (pgm) in Escherichia coli.</title>
        <authorList>
            <person name="Yomano L.P."/>
            <person name="Scopes R.K."/>
            <person name="Ingram L.O."/>
        </authorList>
    </citation>
    <scope>NUCLEOTIDE SEQUENCE [GENOMIC DNA] OF 1-40</scope>
    <source>
        <strain>ATCC 31821 / ZM4 / CP4</strain>
    </source>
</reference>
<reference key="5">
    <citation type="journal article" date="1986" name="Eur. J. Biochem.">
        <title>The two alcohol dehydrogenases of Zymomonas mobilis. Purification by differential dye ligand chromatography, molecular characterisation and physiological roles.</title>
        <authorList>
            <person name="Neale A.D."/>
            <person name="Scopes R.K."/>
            <person name="Kelly J.M."/>
            <person name="Wettenhall R.E.H."/>
        </authorList>
    </citation>
    <scope>PROTEIN SEQUENCE OF 1-31</scope>
</reference>